<protein>
    <recommendedName>
        <fullName evidence="1">Small ribosomal subunit protein uS19c</fullName>
    </recommendedName>
    <alternativeName>
        <fullName evidence="2">30S ribosomal protein S19, chloroplastic</fullName>
    </alternativeName>
</protein>
<comment type="function">
    <text evidence="1">Protein S19 forms a complex with S13 that binds strongly to the 16S ribosomal RNA.</text>
</comment>
<comment type="subcellular location">
    <subcellularLocation>
        <location>Plastid</location>
        <location>Chloroplast</location>
    </subcellularLocation>
</comment>
<comment type="similarity">
    <text evidence="1">Belongs to the universal ribosomal protein uS19 family.</text>
</comment>
<gene>
    <name evidence="1" type="primary">rps19</name>
</gene>
<geneLocation type="chloroplast"/>
<feature type="chain" id="PRO_0000129951" description="Small ribosomal subunit protein uS19c">
    <location>
        <begin position="1"/>
        <end position="92"/>
    </location>
</feature>
<name>RR19_AMBTC</name>
<proteinExistence type="inferred from homology"/>
<evidence type="ECO:0000255" key="1">
    <source>
        <dbReference type="HAMAP-Rule" id="MF_00531"/>
    </source>
</evidence>
<evidence type="ECO:0000305" key="2"/>
<accession>Q70XX0</accession>
<sequence length="92" mass="10559">MSRSLKKNPFVANNLLLKIHKLNTREEKEIIVTWSRASTIIPTMIGHTIAIHNGKEHLPVYVTDRMVGHKLGEFAPTLTFQGHARNDSKFRR</sequence>
<keyword id="KW-0150">Chloroplast</keyword>
<keyword id="KW-0934">Plastid</keyword>
<keyword id="KW-1185">Reference proteome</keyword>
<keyword id="KW-0687">Ribonucleoprotein</keyword>
<keyword id="KW-0689">Ribosomal protein</keyword>
<keyword id="KW-0694">RNA-binding</keyword>
<keyword id="KW-0699">rRNA-binding</keyword>
<dbReference type="EMBL" id="AJ506156">
    <property type="protein sequence ID" value="CAD45147.1"/>
    <property type="molecule type" value="Genomic_DNA"/>
</dbReference>
<dbReference type="RefSeq" id="NP_904139.1">
    <property type="nucleotide sequence ID" value="NC_005086.1"/>
</dbReference>
<dbReference type="SMR" id="Q70XX0"/>
<dbReference type="STRING" id="13333.Q70XX0"/>
<dbReference type="GeneID" id="2546557"/>
<dbReference type="KEGG" id="atr:2546557"/>
<dbReference type="OrthoDB" id="2043at2759"/>
<dbReference type="Proteomes" id="UP000017836">
    <property type="component" value="Chloroplast"/>
</dbReference>
<dbReference type="GO" id="GO:0009507">
    <property type="term" value="C:chloroplast"/>
    <property type="evidence" value="ECO:0007669"/>
    <property type="project" value="UniProtKB-SubCell"/>
</dbReference>
<dbReference type="GO" id="GO:0005763">
    <property type="term" value="C:mitochondrial small ribosomal subunit"/>
    <property type="evidence" value="ECO:0000318"/>
    <property type="project" value="GO_Central"/>
</dbReference>
<dbReference type="GO" id="GO:0019843">
    <property type="term" value="F:rRNA binding"/>
    <property type="evidence" value="ECO:0007669"/>
    <property type="project" value="UniProtKB-UniRule"/>
</dbReference>
<dbReference type="GO" id="GO:0003735">
    <property type="term" value="F:structural constituent of ribosome"/>
    <property type="evidence" value="ECO:0000318"/>
    <property type="project" value="GO_Central"/>
</dbReference>
<dbReference type="GO" id="GO:0000028">
    <property type="term" value="P:ribosomal small subunit assembly"/>
    <property type="evidence" value="ECO:0000318"/>
    <property type="project" value="GO_Central"/>
</dbReference>
<dbReference type="GO" id="GO:0006412">
    <property type="term" value="P:translation"/>
    <property type="evidence" value="ECO:0007669"/>
    <property type="project" value="UniProtKB-UniRule"/>
</dbReference>
<dbReference type="FunFam" id="3.30.860.10:FF:000001">
    <property type="entry name" value="30S ribosomal protein S19"/>
    <property type="match status" value="1"/>
</dbReference>
<dbReference type="Gene3D" id="3.30.860.10">
    <property type="entry name" value="30s Ribosomal Protein S19, Chain A"/>
    <property type="match status" value="1"/>
</dbReference>
<dbReference type="HAMAP" id="MF_00531">
    <property type="entry name" value="Ribosomal_uS19"/>
    <property type="match status" value="1"/>
</dbReference>
<dbReference type="InterPro" id="IPR002222">
    <property type="entry name" value="Ribosomal_uS19"/>
</dbReference>
<dbReference type="InterPro" id="IPR005732">
    <property type="entry name" value="Ribosomal_uS19_bac-type"/>
</dbReference>
<dbReference type="InterPro" id="IPR020934">
    <property type="entry name" value="Ribosomal_uS19_CS"/>
</dbReference>
<dbReference type="InterPro" id="IPR023575">
    <property type="entry name" value="Ribosomal_uS19_SF"/>
</dbReference>
<dbReference type="NCBIfam" id="TIGR01050">
    <property type="entry name" value="rpsS_bact"/>
    <property type="match status" value="1"/>
</dbReference>
<dbReference type="PANTHER" id="PTHR11880">
    <property type="entry name" value="RIBOSOMAL PROTEIN S19P FAMILY MEMBER"/>
    <property type="match status" value="1"/>
</dbReference>
<dbReference type="PANTHER" id="PTHR11880:SF8">
    <property type="entry name" value="SMALL RIBOSOMAL SUBUNIT PROTEIN US19M"/>
    <property type="match status" value="1"/>
</dbReference>
<dbReference type="Pfam" id="PF00203">
    <property type="entry name" value="Ribosomal_S19"/>
    <property type="match status" value="1"/>
</dbReference>
<dbReference type="PIRSF" id="PIRSF002144">
    <property type="entry name" value="Ribosomal_S19"/>
    <property type="match status" value="1"/>
</dbReference>
<dbReference type="PRINTS" id="PR00975">
    <property type="entry name" value="RIBOSOMALS19"/>
</dbReference>
<dbReference type="SUPFAM" id="SSF54570">
    <property type="entry name" value="Ribosomal protein S19"/>
    <property type="match status" value="1"/>
</dbReference>
<dbReference type="PROSITE" id="PS00323">
    <property type="entry name" value="RIBOSOMAL_S19"/>
    <property type="match status" value="1"/>
</dbReference>
<reference key="1">
    <citation type="journal article" date="2003" name="Mol. Biol. Evol.">
        <title>Analysis of the Amborella trichopoda chloroplast genome sequence suggests that Amborella is not a basal angiosperm.</title>
        <authorList>
            <person name="Goremykin V.V."/>
            <person name="Hirsch-Ernst K.I."/>
            <person name="Wolfl S."/>
            <person name="Hellwig F.H."/>
        </authorList>
    </citation>
    <scope>NUCLEOTIDE SEQUENCE [LARGE SCALE GENOMIC DNA]</scope>
</reference>
<organism>
    <name type="scientific">Amborella trichopoda</name>
    <dbReference type="NCBI Taxonomy" id="13333"/>
    <lineage>
        <taxon>Eukaryota</taxon>
        <taxon>Viridiplantae</taxon>
        <taxon>Streptophyta</taxon>
        <taxon>Embryophyta</taxon>
        <taxon>Tracheophyta</taxon>
        <taxon>Spermatophyta</taxon>
        <taxon>Magnoliopsida</taxon>
        <taxon>Amborellales</taxon>
        <taxon>Amborellaceae</taxon>
        <taxon>Amborella</taxon>
    </lineage>
</organism>